<reference key="1">
    <citation type="submission" date="2008-05" db="EMBL/GenBank/DDBJ databases">
        <title>Genome sequence of Helicobacter pylori from the remote Amazon: traces of Asian ancestry of the first Americans.</title>
        <authorList>
            <person name="Kersulyte D."/>
            <person name="Kalia A."/>
            <person name="Gilman R.H."/>
            <person name="Berg D.E."/>
        </authorList>
    </citation>
    <scope>NUCLEOTIDE SEQUENCE [LARGE SCALE GENOMIC DNA]</scope>
    <source>
        <strain>Shi470</strain>
    </source>
</reference>
<dbReference type="EMBL" id="CP001072">
    <property type="protein sequence ID" value="ACD48248.1"/>
    <property type="molecule type" value="Genomic_DNA"/>
</dbReference>
<dbReference type="RefSeq" id="WP_001117778.1">
    <property type="nucleotide sequence ID" value="NC_010698.2"/>
</dbReference>
<dbReference type="SMR" id="B2UTR6"/>
<dbReference type="KEGG" id="hps:HPSH_04065"/>
<dbReference type="HOGENOM" id="CLU_159258_1_1_7"/>
<dbReference type="GO" id="GO:1990904">
    <property type="term" value="C:ribonucleoprotein complex"/>
    <property type="evidence" value="ECO:0007669"/>
    <property type="project" value="UniProtKB-KW"/>
</dbReference>
<dbReference type="GO" id="GO:0005840">
    <property type="term" value="C:ribosome"/>
    <property type="evidence" value="ECO:0007669"/>
    <property type="project" value="UniProtKB-KW"/>
</dbReference>
<dbReference type="GO" id="GO:0003735">
    <property type="term" value="F:structural constituent of ribosome"/>
    <property type="evidence" value="ECO:0007669"/>
    <property type="project" value="InterPro"/>
</dbReference>
<dbReference type="GO" id="GO:0006412">
    <property type="term" value="P:translation"/>
    <property type="evidence" value="ECO:0007669"/>
    <property type="project" value="UniProtKB-UniRule"/>
</dbReference>
<dbReference type="Gene3D" id="1.20.5.1150">
    <property type="entry name" value="Ribosomal protein S8"/>
    <property type="match status" value="1"/>
</dbReference>
<dbReference type="HAMAP" id="MF_00358">
    <property type="entry name" value="Ribosomal_bS21"/>
    <property type="match status" value="1"/>
</dbReference>
<dbReference type="InterPro" id="IPR001911">
    <property type="entry name" value="Ribosomal_bS21"/>
</dbReference>
<dbReference type="InterPro" id="IPR018278">
    <property type="entry name" value="Ribosomal_bS21_CS"/>
</dbReference>
<dbReference type="InterPro" id="IPR038380">
    <property type="entry name" value="Ribosomal_bS21_sf"/>
</dbReference>
<dbReference type="NCBIfam" id="TIGR00030">
    <property type="entry name" value="S21p"/>
    <property type="match status" value="1"/>
</dbReference>
<dbReference type="Pfam" id="PF01165">
    <property type="entry name" value="Ribosomal_S21"/>
    <property type="match status" value="1"/>
</dbReference>
<dbReference type="PRINTS" id="PR00976">
    <property type="entry name" value="RIBOSOMALS21"/>
</dbReference>
<dbReference type="PROSITE" id="PS01181">
    <property type="entry name" value="RIBOSOMAL_S21"/>
    <property type="match status" value="1"/>
</dbReference>
<feature type="chain" id="PRO_1000120628" description="Small ribosomal subunit protein bS21">
    <location>
        <begin position="1"/>
        <end position="70"/>
    </location>
</feature>
<protein>
    <recommendedName>
        <fullName evidence="1">Small ribosomal subunit protein bS21</fullName>
    </recommendedName>
    <alternativeName>
        <fullName evidence="2">30S ribosomal protein S21</fullName>
    </alternativeName>
</protein>
<organism>
    <name type="scientific">Helicobacter pylori (strain Shi470)</name>
    <dbReference type="NCBI Taxonomy" id="512562"/>
    <lineage>
        <taxon>Bacteria</taxon>
        <taxon>Pseudomonadati</taxon>
        <taxon>Campylobacterota</taxon>
        <taxon>Epsilonproteobacteria</taxon>
        <taxon>Campylobacterales</taxon>
        <taxon>Helicobacteraceae</taxon>
        <taxon>Helicobacter</taxon>
    </lineage>
</organism>
<gene>
    <name evidence="1" type="primary">rpsU</name>
    <name type="ordered locus">HPSH_04065</name>
</gene>
<proteinExistence type="inferred from homology"/>
<evidence type="ECO:0000255" key="1">
    <source>
        <dbReference type="HAMAP-Rule" id="MF_00358"/>
    </source>
</evidence>
<evidence type="ECO:0000305" key="2"/>
<sequence length="70" mass="8613">MPGIKVREGDAFDEAYRRFKKQTDRNLVVTECRARRFFESKTEKRKKQKISAKKKVLKRLYMLRRYESRL</sequence>
<comment type="similarity">
    <text evidence="1">Belongs to the bacterial ribosomal protein bS21 family.</text>
</comment>
<name>RS21_HELPS</name>
<accession>B2UTR6</accession>
<keyword id="KW-0687">Ribonucleoprotein</keyword>
<keyword id="KW-0689">Ribosomal protein</keyword>